<reference key="1">
    <citation type="journal article" date="2003" name="Genome Res.">
        <title>Comparative complete genome sequence analysis of the amino acid replacements responsible for the thermostability of Corynebacterium efficiens.</title>
        <authorList>
            <person name="Nishio Y."/>
            <person name="Nakamura Y."/>
            <person name="Kawarabayasi Y."/>
            <person name="Usuda Y."/>
            <person name="Kimura E."/>
            <person name="Sugimoto S."/>
            <person name="Matsui K."/>
            <person name="Yamagishi A."/>
            <person name="Kikuchi H."/>
            <person name="Ikeo K."/>
            <person name="Gojobori T."/>
        </authorList>
    </citation>
    <scope>NUCLEOTIDE SEQUENCE [LARGE SCALE GENOMIC DNA]</scope>
    <source>
        <strain>DSM 44549 / YS-314 / AJ 12310 / JCM 11189 / NBRC 100395</strain>
    </source>
</reference>
<accession>Q8FNF8</accession>
<protein>
    <recommendedName>
        <fullName evidence="1">Endoribonuclease YbeY</fullName>
        <ecNumber evidence="1">3.1.-.-</ecNumber>
    </recommendedName>
</protein>
<dbReference type="EC" id="3.1.-.-" evidence="1"/>
<dbReference type="EMBL" id="BA000035">
    <property type="protein sequence ID" value="BAC18996.1"/>
    <property type="molecule type" value="Genomic_DNA"/>
</dbReference>
<dbReference type="RefSeq" id="WP_006768189.1">
    <property type="nucleotide sequence ID" value="NC_004369.1"/>
</dbReference>
<dbReference type="SMR" id="Q8FNF8"/>
<dbReference type="STRING" id="196164.gene:10742617"/>
<dbReference type="KEGG" id="cef:CE2186"/>
<dbReference type="eggNOG" id="COG0319">
    <property type="taxonomic scope" value="Bacteria"/>
</dbReference>
<dbReference type="HOGENOM" id="CLU_106710_3_2_11"/>
<dbReference type="OrthoDB" id="9807740at2"/>
<dbReference type="Proteomes" id="UP000001409">
    <property type="component" value="Chromosome"/>
</dbReference>
<dbReference type="GO" id="GO:0005737">
    <property type="term" value="C:cytoplasm"/>
    <property type="evidence" value="ECO:0007669"/>
    <property type="project" value="UniProtKB-SubCell"/>
</dbReference>
<dbReference type="GO" id="GO:0004222">
    <property type="term" value="F:metalloendopeptidase activity"/>
    <property type="evidence" value="ECO:0007669"/>
    <property type="project" value="InterPro"/>
</dbReference>
<dbReference type="GO" id="GO:0004521">
    <property type="term" value="F:RNA endonuclease activity"/>
    <property type="evidence" value="ECO:0007669"/>
    <property type="project" value="UniProtKB-UniRule"/>
</dbReference>
<dbReference type="GO" id="GO:0008270">
    <property type="term" value="F:zinc ion binding"/>
    <property type="evidence" value="ECO:0007669"/>
    <property type="project" value="UniProtKB-UniRule"/>
</dbReference>
<dbReference type="GO" id="GO:0006364">
    <property type="term" value="P:rRNA processing"/>
    <property type="evidence" value="ECO:0007669"/>
    <property type="project" value="UniProtKB-UniRule"/>
</dbReference>
<dbReference type="Gene3D" id="3.40.390.30">
    <property type="entry name" value="Metalloproteases ('zincins'), catalytic domain"/>
    <property type="match status" value="1"/>
</dbReference>
<dbReference type="HAMAP" id="MF_00009">
    <property type="entry name" value="Endoribonucl_YbeY"/>
    <property type="match status" value="1"/>
</dbReference>
<dbReference type="InterPro" id="IPR023091">
    <property type="entry name" value="MetalPrtase_cat_dom_sf_prd"/>
</dbReference>
<dbReference type="InterPro" id="IPR002036">
    <property type="entry name" value="YbeY"/>
</dbReference>
<dbReference type="InterPro" id="IPR020549">
    <property type="entry name" value="YbeY_CS"/>
</dbReference>
<dbReference type="NCBIfam" id="TIGR00043">
    <property type="entry name" value="rRNA maturation RNase YbeY"/>
    <property type="match status" value="1"/>
</dbReference>
<dbReference type="PANTHER" id="PTHR46986">
    <property type="entry name" value="ENDORIBONUCLEASE YBEY, CHLOROPLASTIC"/>
    <property type="match status" value="1"/>
</dbReference>
<dbReference type="PANTHER" id="PTHR46986:SF1">
    <property type="entry name" value="ENDORIBONUCLEASE YBEY, CHLOROPLASTIC"/>
    <property type="match status" value="1"/>
</dbReference>
<dbReference type="Pfam" id="PF02130">
    <property type="entry name" value="YbeY"/>
    <property type="match status" value="1"/>
</dbReference>
<dbReference type="SUPFAM" id="SSF55486">
    <property type="entry name" value="Metalloproteases ('zincins'), catalytic domain"/>
    <property type="match status" value="1"/>
</dbReference>
<dbReference type="PROSITE" id="PS01306">
    <property type="entry name" value="UPF0054"/>
    <property type="match status" value="1"/>
</dbReference>
<sequence length="200" mass="21789">MSIEVFNESGYDGVNEEMLIDVLSFALGEMDIHPDAEASIHIVDSDTIAELHVKWLDLEGPTDVMSFPMDELTPGYSRPDGGAPGPAMLGDIVLCPEFAEKQATKAGHDLSHELALLTVHGCLHLLGYDHVEPAQEREMFALQNELLADWYDDVDRRGVVYQPKPTGPGAFPTAADRLELDQTMIAEEQGEPGESGASAR</sequence>
<keyword id="KW-0963">Cytoplasm</keyword>
<keyword id="KW-0255">Endonuclease</keyword>
<keyword id="KW-0378">Hydrolase</keyword>
<keyword id="KW-0479">Metal-binding</keyword>
<keyword id="KW-0540">Nuclease</keyword>
<keyword id="KW-1185">Reference proteome</keyword>
<keyword id="KW-0690">Ribosome biogenesis</keyword>
<keyword id="KW-0698">rRNA processing</keyword>
<keyword id="KW-0862">Zinc</keyword>
<organism>
    <name type="scientific">Corynebacterium efficiens (strain DSM 44549 / YS-314 / AJ 12310 / JCM 11189 / NBRC 100395)</name>
    <dbReference type="NCBI Taxonomy" id="196164"/>
    <lineage>
        <taxon>Bacteria</taxon>
        <taxon>Bacillati</taxon>
        <taxon>Actinomycetota</taxon>
        <taxon>Actinomycetes</taxon>
        <taxon>Mycobacteriales</taxon>
        <taxon>Corynebacteriaceae</taxon>
        <taxon>Corynebacterium</taxon>
    </lineage>
</organism>
<gene>
    <name evidence="1" type="primary">ybeY</name>
    <name type="ordered locus">CE2186</name>
</gene>
<feature type="chain" id="PRO_0000102444" description="Endoribonuclease YbeY">
    <location>
        <begin position="1"/>
        <end position="200"/>
    </location>
</feature>
<feature type="binding site" evidence="1">
    <location>
        <position position="120"/>
    </location>
    <ligand>
        <name>Zn(2+)</name>
        <dbReference type="ChEBI" id="CHEBI:29105"/>
        <note>catalytic</note>
    </ligand>
</feature>
<feature type="binding site" evidence="1">
    <location>
        <position position="124"/>
    </location>
    <ligand>
        <name>Zn(2+)</name>
        <dbReference type="ChEBI" id="CHEBI:29105"/>
        <note>catalytic</note>
    </ligand>
</feature>
<feature type="binding site" evidence="1">
    <location>
        <position position="130"/>
    </location>
    <ligand>
        <name>Zn(2+)</name>
        <dbReference type="ChEBI" id="CHEBI:29105"/>
        <note>catalytic</note>
    </ligand>
</feature>
<name>YBEY_COREF</name>
<evidence type="ECO:0000255" key="1">
    <source>
        <dbReference type="HAMAP-Rule" id="MF_00009"/>
    </source>
</evidence>
<proteinExistence type="inferred from homology"/>
<comment type="function">
    <text evidence="1">Single strand-specific metallo-endoribonuclease involved in late-stage 70S ribosome quality control and in maturation of the 3' terminus of the 16S rRNA.</text>
</comment>
<comment type="cofactor">
    <cofactor evidence="1">
        <name>Zn(2+)</name>
        <dbReference type="ChEBI" id="CHEBI:29105"/>
    </cofactor>
    <text evidence="1">Binds 1 zinc ion.</text>
</comment>
<comment type="subcellular location">
    <subcellularLocation>
        <location evidence="1">Cytoplasm</location>
    </subcellularLocation>
</comment>
<comment type="similarity">
    <text evidence="1">Belongs to the endoribonuclease YbeY family.</text>
</comment>